<reference key="1">
    <citation type="submission" date="2007-04" db="EMBL/GenBank/DDBJ databases">
        <title>Complete sequence of Shewanella putrefaciens CN-32.</title>
        <authorList>
            <consortium name="US DOE Joint Genome Institute"/>
            <person name="Copeland A."/>
            <person name="Lucas S."/>
            <person name="Lapidus A."/>
            <person name="Barry K."/>
            <person name="Detter J.C."/>
            <person name="Glavina del Rio T."/>
            <person name="Hammon N."/>
            <person name="Israni S."/>
            <person name="Dalin E."/>
            <person name="Tice H."/>
            <person name="Pitluck S."/>
            <person name="Chain P."/>
            <person name="Malfatti S."/>
            <person name="Shin M."/>
            <person name="Vergez L."/>
            <person name="Schmutz J."/>
            <person name="Larimer F."/>
            <person name="Land M."/>
            <person name="Hauser L."/>
            <person name="Kyrpides N."/>
            <person name="Mikhailova N."/>
            <person name="Romine M.F."/>
            <person name="Fredrickson J."/>
            <person name="Tiedje J."/>
            <person name="Richardson P."/>
        </authorList>
    </citation>
    <scope>NUCLEOTIDE SEQUENCE [LARGE SCALE GENOMIC DNA]</scope>
    <source>
        <strain>CN-32 / ATCC BAA-453</strain>
    </source>
</reference>
<gene>
    <name type="ordered locus">Sputcn32_1559</name>
</gene>
<name>Y1559_SHEPC</name>
<protein>
    <recommendedName>
        <fullName evidence="1">UPF0434 protein Sputcn32_1559</fullName>
    </recommendedName>
</protein>
<proteinExistence type="inferred from homology"/>
<evidence type="ECO:0000255" key="1">
    <source>
        <dbReference type="HAMAP-Rule" id="MF_01187"/>
    </source>
</evidence>
<sequence>MAFDKKLLDIVACPVCKGKLEYDKTAQQLICKADKLAYPITEGIPVLLENRATPITETV</sequence>
<comment type="similarity">
    <text evidence="1">Belongs to the UPF0434 family.</text>
</comment>
<organism>
    <name type="scientific">Shewanella putrefaciens (strain CN-32 / ATCC BAA-453)</name>
    <dbReference type="NCBI Taxonomy" id="319224"/>
    <lineage>
        <taxon>Bacteria</taxon>
        <taxon>Pseudomonadati</taxon>
        <taxon>Pseudomonadota</taxon>
        <taxon>Gammaproteobacteria</taxon>
        <taxon>Alteromonadales</taxon>
        <taxon>Shewanellaceae</taxon>
        <taxon>Shewanella</taxon>
    </lineage>
</organism>
<feature type="chain" id="PRO_1000065856" description="UPF0434 protein Sputcn32_1559">
    <location>
        <begin position="1"/>
        <end position="59"/>
    </location>
</feature>
<accession>A4Y5Q1</accession>
<dbReference type="EMBL" id="CP000681">
    <property type="protein sequence ID" value="ABP75284.1"/>
    <property type="molecule type" value="Genomic_DNA"/>
</dbReference>
<dbReference type="SMR" id="A4Y5Q1"/>
<dbReference type="STRING" id="319224.Sputcn32_1559"/>
<dbReference type="KEGG" id="spc:Sputcn32_1559"/>
<dbReference type="eggNOG" id="COG2835">
    <property type="taxonomic scope" value="Bacteria"/>
</dbReference>
<dbReference type="HOGENOM" id="CLU_155659_3_1_6"/>
<dbReference type="GO" id="GO:0005829">
    <property type="term" value="C:cytosol"/>
    <property type="evidence" value="ECO:0007669"/>
    <property type="project" value="TreeGrafter"/>
</dbReference>
<dbReference type="FunFam" id="2.20.25.10:FF:000002">
    <property type="entry name" value="UPF0434 protein YcaR"/>
    <property type="match status" value="1"/>
</dbReference>
<dbReference type="Gene3D" id="2.20.25.10">
    <property type="match status" value="1"/>
</dbReference>
<dbReference type="HAMAP" id="MF_01187">
    <property type="entry name" value="UPF0434"/>
    <property type="match status" value="1"/>
</dbReference>
<dbReference type="InterPro" id="IPR005651">
    <property type="entry name" value="Trm112-like"/>
</dbReference>
<dbReference type="PANTHER" id="PTHR33505:SF4">
    <property type="entry name" value="PROTEIN PREY, MITOCHONDRIAL"/>
    <property type="match status" value="1"/>
</dbReference>
<dbReference type="PANTHER" id="PTHR33505">
    <property type="entry name" value="ZGC:162634"/>
    <property type="match status" value="1"/>
</dbReference>
<dbReference type="Pfam" id="PF03966">
    <property type="entry name" value="Trm112p"/>
    <property type="match status" value="1"/>
</dbReference>
<dbReference type="SUPFAM" id="SSF158997">
    <property type="entry name" value="Trm112p-like"/>
    <property type="match status" value="1"/>
</dbReference>